<accession>A0ZZ26</accession>
<reference key="1">
    <citation type="journal article" date="2006" name="Genes Genet. Syst.">
        <title>Complete nucleotide sequence of the cotton (Gossypium barbadense L.) chloroplast genome with a comparative analysis of sequences among 9 dicot plants.</title>
        <authorList>
            <person name="Ibrahim R.I.H."/>
            <person name="Azuma J."/>
            <person name="Sakamoto M."/>
        </authorList>
    </citation>
    <scope>NUCLEOTIDE SEQUENCE [LARGE SCALE GENOMIC DNA]</scope>
</reference>
<sequence length="694" mass="80012">MIDRYKHQQLRIGSVSPQQISAWAKKILPNGETVGEVTKPYTFHYKTNKPEKDGLFCERIFGPIKSGICACGNYRVIGNQKEGPKFCEQCGVEFVDSRIRRYQMGYIRLACPVTHVWYLKRLPSYIANLLDKPLKELEGLVYCDFSFARPIAKKPTFLRLRGSFEYEIQSWKYSIPLFFTTQGFDTFRSREISTGAGAIREQLADLDLRILIDYSVVEWKELGEEGLTGNEWEDRKIGRRKDFLVRRMELAKHFIRTNIEPEWMVLCLLPVLPPELRPIIQIDGGKLMSSDINELYRRVIYRNNTLTDLLTTSRSTPGELVMCQEKLVQEAVDTLLDNGIRGQPMRDGHNKVYKSFSDVIEGKEGRFRETLLGRRVDYSGRSVIVVGPSLSLHRCGLPREIAIELFQTFVIRGLIRQHLAPNIGVAESKIREKGPIVWEILQEVMRGHPVLLNRAPTLHRLGIQAFQPILVEGRAICLHPLVCKGFNADFDGDQMAVPFSLEMQAEARLLMFSHMNLFSPAIGDPISILTQDMLIGLYVLTSGNRRGICANRYNPWNLKSYQNQRFDNNNYKSTREPFFFFLIHVMRLELMGRKESIQIVLCDSGGNQSNALLLQEKLPSKFTMNLRVPIMRFMDIIQQQEVQKKKFFVYTFEPLLVIFLFTEKSKKLYKGFFGPTHMIPNHMVSKLKNSMTPI</sequence>
<feature type="chain" id="PRO_0000277167" description="DNA-directed RNA polymerase subunit beta'">
    <location>
        <begin position="1"/>
        <end position="694"/>
    </location>
</feature>
<feature type="binding site" evidence="1">
    <location>
        <position position="69"/>
    </location>
    <ligand>
        <name>Zn(2+)</name>
        <dbReference type="ChEBI" id="CHEBI:29105"/>
    </ligand>
</feature>
<feature type="binding site" evidence="1">
    <location>
        <position position="71"/>
    </location>
    <ligand>
        <name>Zn(2+)</name>
        <dbReference type="ChEBI" id="CHEBI:29105"/>
    </ligand>
</feature>
<feature type="binding site" evidence="1">
    <location>
        <position position="87"/>
    </location>
    <ligand>
        <name>Zn(2+)</name>
        <dbReference type="ChEBI" id="CHEBI:29105"/>
    </ligand>
</feature>
<feature type="binding site" evidence="1">
    <location>
        <position position="90"/>
    </location>
    <ligand>
        <name>Zn(2+)</name>
        <dbReference type="ChEBI" id="CHEBI:29105"/>
    </ligand>
</feature>
<feature type="binding site" evidence="1">
    <location>
        <position position="489"/>
    </location>
    <ligand>
        <name>Mg(2+)</name>
        <dbReference type="ChEBI" id="CHEBI:18420"/>
    </ligand>
</feature>
<feature type="binding site" evidence="1">
    <location>
        <position position="491"/>
    </location>
    <ligand>
        <name>Mg(2+)</name>
        <dbReference type="ChEBI" id="CHEBI:18420"/>
    </ligand>
</feature>
<feature type="binding site" evidence="1">
    <location>
        <position position="493"/>
    </location>
    <ligand>
        <name>Mg(2+)</name>
        <dbReference type="ChEBI" id="CHEBI:18420"/>
    </ligand>
</feature>
<gene>
    <name evidence="1" type="primary">rpoC1</name>
</gene>
<dbReference type="EC" id="2.7.7.6" evidence="1"/>
<dbReference type="EMBL" id="AP009123">
    <property type="protein sequence ID" value="BAF41238.1"/>
    <property type="status" value="ALT_INIT"/>
    <property type="molecule type" value="Genomic_DNA"/>
</dbReference>
<dbReference type="RefSeq" id="YP_913178.1">
    <property type="nucleotide sequence ID" value="NC_008641.1"/>
</dbReference>
<dbReference type="SMR" id="A0ZZ26"/>
<dbReference type="GeneID" id="4575246"/>
<dbReference type="GO" id="GO:0009507">
    <property type="term" value="C:chloroplast"/>
    <property type="evidence" value="ECO:0007669"/>
    <property type="project" value="UniProtKB-SubCell"/>
</dbReference>
<dbReference type="GO" id="GO:0000428">
    <property type="term" value="C:DNA-directed RNA polymerase complex"/>
    <property type="evidence" value="ECO:0007669"/>
    <property type="project" value="UniProtKB-KW"/>
</dbReference>
<dbReference type="GO" id="GO:0005739">
    <property type="term" value="C:mitochondrion"/>
    <property type="evidence" value="ECO:0007669"/>
    <property type="project" value="GOC"/>
</dbReference>
<dbReference type="GO" id="GO:0003677">
    <property type="term" value="F:DNA binding"/>
    <property type="evidence" value="ECO:0007669"/>
    <property type="project" value="UniProtKB-UniRule"/>
</dbReference>
<dbReference type="GO" id="GO:0003899">
    <property type="term" value="F:DNA-directed RNA polymerase activity"/>
    <property type="evidence" value="ECO:0007669"/>
    <property type="project" value="UniProtKB-UniRule"/>
</dbReference>
<dbReference type="GO" id="GO:0000287">
    <property type="term" value="F:magnesium ion binding"/>
    <property type="evidence" value="ECO:0007669"/>
    <property type="project" value="UniProtKB-UniRule"/>
</dbReference>
<dbReference type="GO" id="GO:0008270">
    <property type="term" value="F:zinc ion binding"/>
    <property type="evidence" value="ECO:0007669"/>
    <property type="project" value="UniProtKB-UniRule"/>
</dbReference>
<dbReference type="GO" id="GO:0006351">
    <property type="term" value="P:DNA-templated transcription"/>
    <property type="evidence" value="ECO:0007669"/>
    <property type="project" value="UniProtKB-UniRule"/>
</dbReference>
<dbReference type="FunFam" id="4.10.860.120:FF:000007">
    <property type="entry name" value="DNA-directed RNA polymerase subunit gamma"/>
    <property type="match status" value="1"/>
</dbReference>
<dbReference type="Gene3D" id="1.10.40.90">
    <property type="match status" value="1"/>
</dbReference>
<dbReference type="Gene3D" id="2.40.40.20">
    <property type="match status" value="1"/>
</dbReference>
<dbReference type="Gene3D" id="4.10.860.120">
    <property type="entry name" value="RNA polymerase II, clamp domain"/>
    <property type="match status" value="1"/>
</dbReference>
<dbReference type="Gene3D" id="1.10.274.100">
    <property type="entry name" value="RNA polymerase Rpb1, domain 3"/>
    <property type="match status" value="1"/>
</dbReference>
<dbReference type="HAMAP" id="MF_01323">
    <property type="entry name" value="RNApol_bact_RpoC1"/>
    <property type="match status" value="1"/>
</dbReference>
<dbReference type="InterPro" id="IPR045867">
    <property type="entry name" value="DNA-dir_RpoC_beta_prime"/>
</dbReference>
<dbReference type="InterPro" id="IPR000722">
    <property type="entry name" value="RNA_pol_asu"/>
</dbReference>
<dbReference type="InterPro" id="IPR006592">
    <property type="entry name" value="RNA_pol_N"/>
</dbReference>
<dbReference type="InterPro" id="IPR007080">
    <property type="entry name" value="RNA_pol_Rpb1_1"/>
</dbReference>
<dbReference type="InterPro" id="IPR042102">
    <property type="entry name" value="RNA_pol_Rpb1_3_sf"/>
</dbReference>
<dbReference type="InterPro" id="IPR044893">
    <property type="entry name" value="RNA_pol_Rpb1_clamp_domain"/>
</dbReference>
<dbReference type="InterPro" id="IPR034678">
    <property type="entry name" value="RNApol_RpoC1"/>
</dbReference>
<dbReference type="PANTHER" id="PTHR19376">
    <property type="entry name" value="DNA-DIRECTED RNA POLYMERASE"/>
    <property type="match status" value="1"/>
</dbReference>
<dbReference type="PANTHER" id="PTHR19376:SF54">
    <property type="entry name" value="DNA-DIRECTED RNA POLYMERASE SUBUNIT BETA"/>
    <property type="match status" value="1"/>
</dbReference>
<dbReference type="Pfam" id="PF04997">
    <property type="entry name" value="RNA_pol_Rpb1_1"/>
    <property type="match status" value="2"/>
</dbReference>
<dbReference type="Pfam" id="PF00623">
    <property type="entry name" value="RNA_pol_Rpb1_2"/>
    <property type="match status" value="2"/>
</dbReference>
<dbReference type="SMART" id="SM00663">
    <property type="entry name" value="RPOLA_N"/>
    <property type="match status" value="1"/>
</dbReference>
<dbReference type="SUPFAM" id="SSF64484">
    <property type="entry name" value="beta and beta-prime subunits of DNA dependent RNA-polymerase"/>
    <property type="match status" value="1"/>
</dbReference>
<keyword id="KW-0150">Chloroplast</keyword>
<keyword id="KW-0240">DNA-directed RNA polymerase</keyword>
<keyword id="KW-0460">Magnesium</keyword>
<keyword id="KW-0479">Metal-binding</keyword>
<keyword id="KW-0548">Nucleotidyltransferase</keyword>
<keyword id="KW-0934">Plastid</keyword>
<keyword id="KW-0804">Transcription</keyword>
<keyword id="KW-0808">Transferase</keyword>
<keyword id="KW-0862">Zinc</keyword>
<evidence type="ECO:0000255" key="1">
    <source>
        <dbReference type="HAMAP-Rule" id="MF_01323"/>
    </source>
</evidence>
<evidence type="ECO:0000305" key="2"/>
<organism>
    <name type="scientific">Gossypium barbadense</name>
    <name type="common">Sea Island cotton</name>
    <name type="synonym">Hibiscus barbadensis</name>
    <dbReference type="NCBI Taxonomy" id="3634"/>
    <lineage>
        <taxon>Eukaryota</taxon>
        <taxon>Viridiplantae</taxon>
        <taxon>Streptophyta</taxon>
        <taxon>Embryophyta</taxon>
        <taxon>Tracheophyta</taxon>
        <taxon>Spermatophyta</taxon>
        <taxon>Magnoliopsida</taxon>
        <taxon>eudicotyledons</taxon>
        <taxon>Gunneridae</taxon>
        <taxon>Pentapetalae</taxon>
        <taxon>rosids</taxon>
        <taxon>malvids</taxon>
        <taxon>Malvales</taxon>
        <taxon>Malvaceae</taxon>
        <taxon>Malvoideae</taxon>
        <taxon>Gossypium</taxon>
    </lineage>
</organism>
<comment type="function">
    <text evidence="1">DNA-dependent RNA polymerase catalyzes the transcription of DNA into RNA using the four ribonucleoside triphosphates as substrates.</text>
</comment>
<comment type="catalytic activity">
    <reaction evidence="1">
        <text>RNA(n) + a ribonucleoside 5'-triphosphate = RNA(n+1) + diphosphate</text>
        <dbReference type="Rhea" id="RHEA:21248"/>
        <dbReference type="Rhea" id="RHEA-COMP:14527"/>
        <dbReference type="Rhea" id="RHEA-COMP:17342"/>
        <dbReference type="ChEBI" id="CHEBI:33019"/>
        <dbReference type="ChEBI" id="CHEBI:61557"/>
        <dbReference type="ChEBI" id="CHEBI:140395"/>
        <dbReference type="EC" id="2.7.7.6"/>
    </reaction>
</comment>
<comment type="cofactor">
    <cofactor evidence="1">
        <name>Mg(2+)</name>
        <dbReference type="ChEBI" id="CHEBI:18420"/>
    </cofactor>
    <text evidence="1">Binds 1 Mg(2+) ion per subunit.</text>
</comment>
<comment type="cofactor">
    <cofactor evidence="1">
        <name>Zn(2+)</name>
        <dbReference type="ChEBI" id="CHEBI:29105"/>
    </cofactor>
    <text evidence="1">Binds 1 Zn(2+) ion per subunit.</text>
</comment>
<comment type="subunit">
    <text evidence="1">In plastids the minimal PEP RNA polymerase catalytic core is composed of four subunits: alpha, beta, beta', and beta''. When a (nuclear-encoded) sigma factor is associated with the core the holoenzyme is formed, which can initiate transcription.</text>
</comment>
<comment type="subcellular location">
    <subcellularLocation>
        <location evidence="1">Plastid</location>
        <location evidence="1">Chloroplast</location>
    </subcellularLocation>
</comment>
<comment type="similarity">
    <text evidence="1">Belongs to the RNA polymerase beta' chain family. RpoC1 subfamily.</text>
</comment>
<comment type="sequence caution" evidence="2">
    <conflict type="erroneous initiation">
        <sequence resource="EMBL-CDS" id="BAF41238"/>
    </conflict>
    <text>Extended N-terminus.</text>
</comment>
<geneLocation type="chloroplast"/>
<proteinExistence type="inferred from homology"/>
<protein>
    <recommendedName>
        <fullName evidence="1">DNA-directed RNA polymerase subunit beta'</fullName>
        <ecNumber evidence="1">2.7.7.6</ecNumber>
    </recommendedName>
    <alternativeName>
        <fullName evidence="1">PEP</fullName>
    </alternativeName>
    <alternativeName>
        <fullName evidence="1">Plastid-encoded RNA polymerase subunit beta'</fullName>
        <shortName evidence="1">RNA polymerase subunit beta'</shortName>
    </alternativeName>
</protein>
<name>RPOC1_GOSBA</name>